<protein>
    <recommendedName>
        <fullName>Ribosome biogenesis protein NSA2</fullName>
    </recommendedName>
</protein>
<keyword id="KW-0539">Nucleus</keyword>
<keyword id="KW-1185">Reference proteome</keyword>
<keyword id="KW-0687">Ribonucleoprotein</keyword>
<keyword id="KW-0690">Ribosome biogenesis</keyword>
<keyword id="KW-0698">rRNA processing</keyword>
<reference key="1">
    <citation type="journal article" date="2009" name="Nature">
        <title>Evolution of pathogenicity and sexual reproduction in eight Candida genomes.</title>
        <authorList>
            <person name="Butler G."/>
            <person name="Rasmussen M.D."/>
            <person name="Lin M.F."/>
            <person name="Santos M.A.S."/>
            <person name="Sakthikumar S."/>
            <person name="Munro C.A."/>
            <person name="Rheinbay E."/>
            <person name="Grabherr M."/>
            <person name="Forche A."/>
            <person name="Reedy J.L."/>
            <person name="Agrafioti I."/>
            <person name="Arnaud M.B."/>
            <person name="Bates S."/>
            <person name="Brown A.J.P."/>
            <person name="Brunke S."/>
            <person name="Costanzo M.C."/>
            <person name="Fitzpatrick D.A."/>
            <person name="de Groot P.W.J."/>
            <person name="Harris D."/>
            <person name="Hoyer L.L."/>
            <person name="Hube B."/>
            <person name="Klis F.M."/>
            <person name="Kodira C."/>
            <person name="Lennard N."/>
            <person name="Logue M.E."/>
            <person name="Martin R."/>
            <person name="Neiman A.M."/>
            <person name="Nikolaou E."/>
            <person name="Quail M.A."/>
            <person name="Quinn J."/>
            <person name="Santos M.C."/>
            <person name="Schmitzberger F.F."/>
            <person name="Sherlock G."/>
            <person name="Shah P."/>
            <person name="Silverstein K.A.T."/>
            <person name="Skrzypek M.S."/>
            <person name="Soll D."/>
            <person name="Staggs R."/>
            <person name="Stansfield I."/>
            <person name="Stumpf M.P.H."/>
            <person name="Sudbery P.E."/>
            <person name="Srikantha T."/>
            <person name="Zeng Q."/>
            <person name="Berman J."/>
            <person name="Berriman M."/>
            <person name="Heitman J."/>
            <person name="Gow N.A.R."/>
            <person name="Lorenz M.C."/>
            <person name="Birren B.W."/>
            <person name="Kellis M."/>
            <person name="Cuomo C.A."/>
        </authorList>
    </citation>
    <scope>NUCLEOTIDE SEQUENCE [LARGE SCALE GENOMIC DNA]</scope>
    <source>
        <strain>ATCC 11503 / BCRC 21390 / CBS 2605 / JCM 1781 / NBRC 1676 / NRRL YB-4239</strain>
    </source>
</reference>
<gene>
    <name type="primary">NSA2</name>
    <name type="ORF">LELG_02728</name>
</gene>
<accession>A5DZE1</accession>
<dbReference type="EMBL" id="CH981526">
    <property type="protein sequence ID" value="EDK44549.1"/>
    <property type="molecule type" value="Genomic_DNA"/>
</dbReference>
<dbReference type="RefSeq" id="XP_001526170.1">
    <property type="nucleotide sequence ID" value="XM_001526120.1"/>
</dbReference>
<dbReference type="SMR" id="A5DZE1"/>
<dbReference type="FunCoup" id="A5DZE1">
    <property type="interactions" value="1188"/>
</dbReference>
<dbReference type="STRING" id="379508.A5DZE1"/>
<dbReference type="GeneID" id="5233526"/>
<dbReference type="KEGG" id="lel:PVL30_003572"/>
<dbReference type="VEuPathDB" id="FungiDB:LELG_02728"/>
<dbReference type="eggNOG" id="KOG3163">
    <property type="taxonomic scope" value="Eukaryota"/>
</dbReference>
<dbReference type="HOGENOM" id="CLU_1070048_0_0_1"/>
<dbReference type="InParanoid" id="A5DZE1"/>
<dbReference type="OMA" id="TNTPEND"/>
<dbReference type="OrthoDB" id="1847590at2759"/>
<dbReference type="Proteomes" id="UP000001996">
    <property type="component" value="Unassembled WGS sequence"/>
</dbReference>
<dbReference type="GO" id="GO:0005730">
    <property type="term" value="C:nucleolus"/>
    <property type="evidence" value="ECO:0007669"/>
    <property type="project" value="UniProtKB-SubCell"/>
</dbReference>
<dbReference type="GO" id="GO:0030687">
    <property type="term" value="C:preribosome, large subunit precursor"/>
    <property type="evidence" value="ECO:0007669"/>
    <property type="project" value="EnsemblFungi"/>
</dbReference>
<dbReference type="GO" id="GO:0000466">
    <property type="term" value="P:maturation of 5.8S rRNA from tricistronic rRNA transcript (SSU-rRNA, 5.8S rRNA, LSU-rRNA)"/>
    <property type="evidence" value="ECO:0007669"/>
    <property type="project" value="EnsemblFungi"/>
</dbReference>
<dbReference type="GO" id="GO:0000463">
    <property type="term" value="P:maturation of LSU-rRNA from tricistronic rRNA transcript (SSU-rRNA, 5.8S rRNA, LSU-rRNA)"/>
    <property type="evidence" value="ECO:0007669"/>
    <property type="project" value="EnsemblFungi"/>
</dbReference>
<dbReference type="CDD" id="cd11381">
    <property type="entry name" value="NSA2"/>
    <property type="match status" value="1"/>
</dbReference>
<dbReference type="FunFam" id="2.40.10.310:FF:000001">
    <property type="entry name" value="NSA2, ribosome biogenesis homolog"/>
    <property type="match status" value="1"/>
</dbReference>
<dbReference type="Gene3D" id="2.40.10.310">
    <property type="match status" value="1"/>
</dbReference>
<dbReference type="InterPro" id="IPR039411">
    <property type="entry name" value="NSA2_fam"/>
</dbReference>
<dbReference type="InterPro" id="IPR022309">
    <property type="entry name" value="Ribosomal_Se8/biogenesis_NSA2"/>
</dbReference>
<dbReference type="PANTHER" id="PTHR12642">
    <property type="entry name" value="RIBOSOME BIOGENESIS PROTEIN NSA2 HOMOLOG"/>
    <property type="match status" value="1"/>
</dbReference>
<dbReference type="Pfam" id="PF01201">
    <property type="entry name" value="Ribosomal_S8e"/>
    <property type="match status" value="1"/>
</dbReference>
<organism>
    <name type="scientific">Lodderomyces elongisporus (strain ATCC 11503 / CBS 2605 / JCM 1781 / NBRC 1676 / NRRL YB-4239)</name>
    <name type="common">Yeast</name>
    <name type="synonym">Saccharomyces elongisporus</name>
    <dbReference type="NCBI Taxonomy" id="379508"/>
    <lineage>
        <taxon>Eukaryota</taxon>
        <taxon>Fungi</taxon>
        <taxon>Dikarya</taxon>
        <taxon>Ascomycota</taxon>
        <taxon>Saccharomycotina</taxon>
        <taxon>Pichiomycetes</taxon>
        <taxon>Debaryomycetaceae</taxon>
        <taxon>Candida/Lodderomyces clade</taxon>
        <taxon>Lodderomyces</taxon>
    </lineage>
</organism>
<proteinExistence type="inferred from homology"/>
<feature type="chain" id="PRO_0000320419" description="Ribosome biogenesis protein NSA2">
    <location>
        <begin position="1"/>
        <end position="261"/>
    </location>
</feature>
<feature type="region of interest" description="Disordered" evidence="4">
    <location>
        <begin position="1"/>
        <end position="38"/>
    </location>
</feature>
<feature type="region of interest" description="Disordered" evidence="4">
    <location>
        <begin position="56"/>
        <end position="84"/>
    </location>
</feature>
<feature type="short sequence motif" description="Nuclear localization signal 1" evidence="3">
    <location>
        <begin position="15"/>
        <end position="22"/>
    </location>
</feature>
<feature type="short sequence motif" description="Nuclear localization signal 2" evidence="3">
    <location>
        <begin position="51"/>
        <end position="58"/>
    </location>
</feature>
<feature type="compositionally biased region" description="Basic and acidic residues" evidence="4">
    <location>
        <begin position="7"/>
        <end position="37"/>
    </location>
</feature>
<name>NSA2_LODEL</name>
<sequence length="261" mass="29670">MPQNEYIEQHIKQHGRRLDHEERKRKKEAREGHRVAKDAQTLKGWRAKQFAKKRYSEKVSMRKKIKAHQESKVKGPSTPKQDEGEALPTYLLDRQTNNTAKALSSSIKQKRLEKADKFSVPLPKVRGISEEEMFKVIKTGKSKTKSWKRMITKHTFVGEGFTRRPVKMERIIRPAALRQKKANVTHPELGVTVFLPILGVKKNPQSPMYTQLGVLTKGTIIEVNVSELGLVTAGGKVVWGKYAQITNEPDRDGCVNAVLLV</sequence>
<comment type="function">
    <text evidence="1">Involved in the biogenesis of the 60S ribosomal subunit. May play a part in the quality control of pre-60S particles (By similarity).</text>
</comment>
<comment type="subunit">
    <text evidence="2">Component of the pre-66S ribosomal particle. Interacts with NOP7 and RRP1. Interacts with RSA4 (via WD repeats).</text>
</comment>
<comment type="subcellular location">
    <subcellularLocation>
        <location evidence="1">Nucleus</location>
        <location evidence="1">Nucleolus</location>
    </subcellularLocation>
</comment>
<comment type="similarity">
    <text evidence="5">Belongs to the eukaryotic ribosomal protein eS8 family. Ribosome biogenesis protein NSA2 subfamily.</text>
</comment>
<evidence type="ECO:0000250" key="1"/>
<evidence type="ECO:0000250" key="2">
    <source>
        <dbReference type="UniProtKB" id="P40078"/>
    </source>
</evidence>
<evidence type="ECO:0000255" key="3">
    <source>
        <dbReference type="PROSITE-ProRule" id="PRU00768"/>
    </source>
</evidence>
<evidence type="ECO:0000256" key="4">
    <source>
        <dbReference type="SAM" id="MobiDB-lite"/>
    </source>
</evidence>
<evidence type="ECO:0000305" key="5"/>